<accession>P77866</accession>
<feature type="chain" id="PRO_0000070706" description="Chaperone protein DnaJ">
    <location>
        <begin position="1"/>
        <end position="375"/>
    </location>
</feature>
<feature type="domain" description="J" evidence="1">
    <location>
        <begin position="5"/>
        <end position="70"/>
    </location>
</feature>
<feature type="repeat" description="CXXCXGXG motif">
    <location>
        <begin position="145"/>
        <end position="152"/>
    </location>
</feature>
<feature type="repeat" description="CXXCXGXG motif">
    <location>
        <begin position="162"/>
        <end position="169"/>
    </location>
</feature>
<feature type="repeat" description="CXXCXGXG motif">
    <location>
        <begin position="184"/>
        <end position="191"/>
    </location>
</feature>
<feature type="repeat" description="CXXCXGXG motif">
    <location>
        <begin position="198"/>
        <end position="205"/>
    </location>
</feature>
<feature type="zinc finger region" description="CR-type" evidence="1">
    <location>
        <begin position="132"/>
        <end position="210"/>
    </location>
</feature>
<feature type="binding site" evidence="1">
    <location>
        <position position="145"/>
    </location>
    <ligand>
        <name>Zn(2+)</name>
        <dbReference type="ChEBI" id="CHEBI:29105"/>
        <label>1</label>
    </ligand>
</feature>
<feature type="binding site" evidence="1">
    <location>
        <position position="148"/>
    </location>
    <ligand>
        <name>Zn(2+)</name>
        <dbReference type="ChEBI" id="CHEBI:29105"/>
        <label>1</label>
    </ligand>
</feature>
<feature type="binding site" evidence="1">
    <location>
        <position position="162"/>
    </location>
    <ligand>
        <name>Zn(2+)</name>
        <dbReference type="ChEBI" id="CHEBI:29105"/>
        <label>2</label>
    </ligand>
</feature>
<feature type="binding site" evidence="1">
    <location>
        <position position="165"/>
    </location>
    <ligand>
        <name>Zn(2+)</name>
        <dbReference type="ChEBI" id="CHEBI:29105"/>
        <label>2</label>
    </ligand>
</feature>
<feature type="binding site" evidence="1">
    <location>
        <position position="184"/>
    </location>
    <ligand>
        <name>Zn(2+)</name>
        <dbReference type="ChEBI" id="CHEBI:29105"/>
        <label>2</label>
    </ligand>
</feature>
<feature type="binding site" evidence="1">
    <location>
        <position position="187"/>
    </location>
    <ligand>
        <name>Zn(2+)</name>
        <dbReference type="ChEBI" id="CHEBI:29105"/>
        <label>2</label>
    </ligand>
</feature>
<feature type="binding site" evidence="1">
    <location>
        <position position="198"/>
    </location>
    <ligand>
        <name>Zn(2+)</name>
        <dbReference type="ChEBI" id="CHEBI:29105"/>
        <label>1</label>
    </ligand>
</feature>
<feature type="binding site" evidence="1">
    <location>
        <position position="201"/>
    </location>
    <ligand>
        <name>Zn(2+)</name>
        <dbReference type="ChEBI" id="CHEBI:29105"/>
        <label>1</label>
    </ligand>
</feature>
<gene>
    <name evidence="1" type="primary">dnaJ</name>
</gene>
<dbReference type="EMBL" id="D87753">
    <property type="protein sequence ID" value="BAA32697.1"/>
    <property type="molecule type" value="Genomic_DNA"/>
</dbReference>
<dbReference type="RefSeq" id="WP_005546699.1">
    <property type="nucleotide sequence ID" value="NZ_VSEW01000012.1"/>
</dbReference>
<dbReference type="SMR" id="P77866"/>
<dbReference type="STRING" id="714.ACT75_02530"/>
<dbReference type="GeneID" id="77211500"/>
<dbReference type="eggNOG" id="COG0484">
    <property type="taxonomic scope" value="Bacteria"/>
</dbReference>
<dbReference type="OMA" id="MATDYYA"/>
<dbReference type="GO" id="GO:0005737">
    <property type="term" value="C:cytoplasm"/>
    <property type="evidence" value="ECO:0007669"/>
    <property type="project" value="UniProtKB-SubCell"/>
</dbReference>
<dbReference type="GO" id="GO:0005524">
    <property type="term" value="F:ATP binding"/>
    <property type="evidence" value="ECO:0007669"/>
    <property type="project" value="InterPro"/>
</dbReference>
<dbReference type="GO" id="GO:0031072">
    <property type="term" value="F:heat shock protein binding"/>
    <property type="evidence" value="ECO:0007669"/>
    <property type="project" value="InterPro"/>
</dbReference>
<dbReference type="GO" id="GO:0051082">
    <property type="term" value="F:unfolded protein binding"/>
    <property type="evidence" value="ECO:0007669"/>
    <property type="project" value="UniProtKB-UniRule"/>
</dbReference>
<dbReference type="GO" id="GO:0008270">
    <property type="term" value="F:zinc ion binding"/>
    <property type="evidence" value="ECO:0007669"/>
    <property type="project" value="UniProtKB-UniRule"/>
</dbReference>
<dbReference type="GO" id="GO:0051085">
    <property type="term" value="P:chaperone cofactor-dependent protein refolding"/>
    <property type="evidence" value="ECO:0007669"/>
    <property type="project" value="TreeGrafter"/>
</dbReference>
<dbReference type="GO" id="GO:0006260">
    <property type="term" value="P:DNA replication"/>
    <property type="evidence" value="ECO:0007669"/>
    <property type="project" value="UniProtKB-KW"/>
</dbReference>
<dbReference type="GO" id="GO:0042026">
    <property type="term" value="P:protein refolding"/>
    <property type="evidence" value="ECO:0007669"/>
    <property type="project" value="TreeGrafter"/>
</dbReference>
<dbReference type="GO" id="GO:0009408">
    <property type="term" value="P:response to heat"/>
    <property type="evidence" value="ECO:0007669"/>
    <property type="project" value="InterPro"/>
</dbReference>
<dbReference type="CDD" id="cd06257">
    <property type="entry name" value="DnaJ"/>
    <property type="match status" value="1"/>
</dbReference>
<dbReference type="CDD" id="cd10747">
    <property type="entry name" value="DnaJ_C"/>
    <property type="match status" value="1"/>
</dbReference>
<dbReference type="CDD" id="cd10719">
    <property type="entry name" value="DnaJ_zf"/>
    <property type="match status" value="1"/>
</dbReference>
<dbReference type="FunFam" id="1.10.287.110:FF:000034">
    <property type="entry name" value="Chaperone protein DnaJ"/>
    <property type="match status" value="1"/>
</dbReference>
<dbReference type="FunFam" id="2.10.230.10:FF:000002">
    <property type="entry name" value="Molecular chaperone DnaJ"/>
    <property type="match status" value="1"/>
</dbReference>
<dbReference type="FunFam" id="2.60.260.20:FF:000004">
    <property type="entry name" value="Molecular chaperone DnaJ"/>
    <property type="match status" value="1"/>
</dbReference>
<dbReference type="Gene3D" id="1.10.287.110">
    <property type="entry name" value="DnaJ domain"/>
    <property type="match status" value="1"/>
</dbReference>
<dbReference type="Gene3D" id="2.10.230.10">
    <property type="entry name" value="Heat shock protein DnaJ, cysteine-rich domain"/>
    <property type="match status" value="1"/>
</dbReference>
<dbReference type="Gene3D" id="2.60.260.20">
    <property type="entry name" value="Urease metallochaperone UreE, N-terminal domain"/>
    <property type="match status" value="2"/>
</dbReference>
<dbReference type="HAMAP" id="MF_01152">
    <property type="entry name" value="DnaJ"/>
    <property type="match status" value="1"/>
</dbReference>
<dbReference type="InterPro" id="IPR012724">
    <property type="entry name" value="DnaJ"/>
</dbReference>
<dbReference type="InterPro" id="IPR002939">
    <property type="entry name" value="DnaJ_C"/>
</dbReference>
<dbReference type="InterPro" id="IPR001623">
    <property type="entry name" value="DnaJ_domain"/>
</dbReference>
<dbReference type="InterPro" id="IPR018253">
    <property type="entry name" value="DnaJ_domain_CS"/>
</dbReference>
<dbReference type="InterPro" id="IPR008971">
    <property type="entry name" value="HSP40/DnaJ_pept-bd"/>
</dbReference>
<dbReference type="InterPro" id="IPR001305">
    <property type="entry name" value="HSP_DnaJ_Cys-rich_dom"/>
</dbReference>
<dbReference type="InterPro" id="IPR036410">
    <property type="entry name" value="HSP_DnaJ_Cys-rich_dom_sf"/>
</dbReference>
<dbReference type="InterPro" id="IPR036869">
    <property type="entry name" value="J_dom_sf"/>
</dbReference>
<dbReference type="NCBIfam" id="TIGR02349">
    <property type="entry name" value="DnaJ_bact"/>
    <property type="match status" value="1"/>
</dbReference>
<dbReference type="NCBIfam" id="NF008035">
    <property type="entry name" value="PRK10767.1"/>
    <property type="match status" value="1"/>
</dbReference>
<dbReference type="PANTHER" id="PTHR43096:SF48">
    <property type="entry name" value="CHAPERONE PROTEIN DNAJ"/>
    <property type="match status" value="1"/>
</dbReference>
<dbReference type="PANTHER" id="PTHR43096">
    <property type="entry name" value="DNAJ HOMOLOG 1, MITOCHONDRIAL-RELATED"/>
    <property type="match status" value="1"/>
</dbReference>
<dbReference type="Pfam" id="PF00226">
    <property type="entry name" value="DnaJ"/>
    <property type="match status" value="1"/>
</dbReference>
<dbReference type="Pfam" id="PF01556">
    <property type="entry name" value="DnaJ_C"/>
    <property type="match status" value="1"/>
</dbReference>
<dbReference type="Pfam" id="PF00684">
    <property type="entry name" value="DnaJ_CXXCXGXG"/>
    <property type="match status" value="1"/>
</dbReference>
<dbReference type="PRINTS" id="PR00625">
    <property type="entry name" value="JDOMAIN"/>
</dbReference>
<dbReference type="SMART" id="SM00271">
    <property type="entry name" value="DnaJ"/>
    <property type="match status" value="1"/>
</dbReference>
<dbReference type="SUPFAM" id="SSF46565">
    <property type="entry name" value="Chaperone J-domain"/>
    <property type="match status" value="1"/>
</dbReference>
<dbReference type="SUPFAM" id="SSF57938">
    <property type="entry name" value="DnaJ/Hsp40 cysteine-rich domain"/>
    <property type="match status" value="1"/>
</dbReference>
<dbReference type="SUPFAM" id="SSF49493">
    <property type="entry name" value="HSP40/DnaJ peptide-binding domain"/>
    <property type="match status" value="2"/>
</dbReference>
<dbReference type="PROSITE" id="PS00636">
    <property type="entry name" value="DNAJ_1"/>
    <property type="match status" value="1"/>
</dbReference>
<dbReference type="PROSITE" id="PS50076">
    <property type="entry name" value="DNAJ_2"/>
    <property type="match status" value="1"/>
</dbReference>
<dbReference type="PROSITE" id="PS51188">
    <property type="entry name" value="ZF_CR"/>
    <property type="match status" value="1"/>
</dbReference>
<keyword id="KW-0143">Chaperone</keyword>
<keyword id="KW-0963">Cytoplasm</keyword>
<keyword id="KW-0235">DNA replication</keyword>
<keyword id="KW-0479">Metal-binding</keyword>
<keyword id="KW-0677">Repeat</keyword>
<keyword id="KW-0346">Stress response</keyword>
<keyword id="KW-0862">Zinc</keyword>
<keyword id="KW-0863">Zinc-finger</keyword>
<organism>
    <name type="scientific">Aggregatibacter actinomycetemcomitans</name>
    <name type="common">Actinobacillus actinomycetemcomitans</name>
    <name type="synonym">Haemophilus actinomycetemcomitans</name>
    <dbReference type="NCBI Taxonomy" id="714"/>
    <lineage>
        <taxon>Bacteria</taxon>
        <taxon>Pseudomonadati</taxon>
        <taxon>Pseudomonadota</taxon>
        <taxon>Gammaproteobacteria</taxon>
        <taxon>Pasteurellales</taxon>
        <taxon>Pasteurellaceae</taxon>
        <taxon>Aggregatibacter</taxon>
    </lineage>
</organism>
<proteinExistence type="inferred from homology"/>
<sequence>MAKQDYYELLGISRSADEKEIKRAYKKLAMQYHPDRTKGDKEKEEKFKEIQEAYEVLNDKEKRAAYDQYGHAAFEQGTGFGGGSFGGADFGDIFGDMFGDIFGGGGRGRQRVVRGDDLRYDIEITLEEAVKGTTKDIKIHTLAPCDTCHGTGAEAGSKVETCPHCHGAGRLRRQQGFFVTEQPCHFCHGTGKKIEKPCKTCHGDGRVNKAKNLSVKIPAGVDTGNQLRLSGEGAAGENGAPAGDLYVVIHVKEHHIFERDGSNLYCEVPISFTMAALGGEIEVPTLDGRVKLKIPEETQTGKLFRMRGKGVTSTRSGYAGDLTCRIIVETPVKLNEEQKELLRKLEESLEGQTKQRPKSSSFLDGVKRFFDDLTK</sequence>
<name>DNAJ_AGGAC</name>
<evidence type="ECO:0000255" key="1">
    <source>
        <dbReference type="HAMAP-Rule" id="MF_01152"/>
    </source>
</evidence>
<protein>
    <recommendedName>
        <fullName evidence="1">Chaperone protein DnaJ</fullName>
    </recommendedName>
</protein>
<comment type="function">
    <text evidence="1">Participates actively in the response to hyperosmotic and heat shock by preventing the aggregation of stress-denatured proteins and by disaggregating proteins, also in an autonomous, DnaK-independent fashion. Unfolded proteins bind initially to DnaJ; upon interaction with the DnaJ-bound protein, DnaK hydrolyzes its bound ATP, resulting in the formation of a stable complex. GrpE releases ADP from DnaK; ATP binding to DnaK triggers the release of the substrate protein, thus completing the reaction cycle. Several rounds of ATP-dependent interactions between DnaJ, DnaK and GrpE are required for fully efficient folding. Also involved, together with DnaK and GrpE, in the DNA replication of plasmids through activation of initiation proteins.</text>
</comment>
<comment type="cofactor">
    <cofactor evidence="1">
        <name>Zn(2+)</name>
        <dbReference type="ChEBI" id="CHEBI:29105"/>
    </cofactor>
    <text evidence="1">Binds 2 Zn(2+) ions per monomer.</text>
</comment>
<comment type="subunit">
    <text evidence="1">Homodimer.</text>
</comment>
<comment type="subcellular location">
    <subcellularLocation>
        <location evidence="1">Cytoplasm</location>
    </subcellularLocation>
</comment>
<comment type="domain">
    <text evidence="1">The J domain is necessary and sufficient to stimulate DnaK ATPase activity. Zinc center 1 plays an important role in the autonomous, DnaK-independent chaperone activity of DnaJ. Zinc center 2 is essential for interaction with DnaK and for DnaJ activity.</text>
</comment>
<comment type="similarity">
    <text evidence="1">Belongs to the DnaJ family.</text>
</comment>
<reference key="1">
    <citation type="journal article" date="1997" name="DNA Seq.">
        <title>Isolation and characterization of the dnaKJ operon from Actinobacillus actinomycetemcomitans.</title>
        <authorList>
            <person name="Yoshida A."/>
            <person name="Nakano Y."/>
            <person name="Yamashita Y."/>
            <person name="Yu H."/>
            <person name="Ohishi M."/>
            <person name="Koga T."/>
        </authorList>
    </citation>
    <scope>NUCLEOTIDE SEQUENCE [GENOMIC DNA]</scope>
    <source>
        <strain>ATCC 43718 / FDC Y4 / Serotype b</strain>
    </source>
</reference>